<organism>
    <name type="scientific">Trichodesmium erythraeum (strain IMS101)</name>
    <dbReference type="NCBI Taxonomy" id="203124"/>
    <lineage>
        <taxon>Bacteria</taxon>
        <taxon>Bacillati</taxon>
        <taxon>Cyanobacteriota</taxon>
        <taxon>Cyanophyceae</taxon>
        <taxon>Oscillatoriophycideae</taxon>
        <taxon>Oscillatoriales</taxon>
        <taxon>Microcoleaceae</taxon>
        <taxon>Trichodesmium</taxon>
    </lineage>
</organism>
<feature type="chain" id="PRO_1000011273" description="Phosphopantetheine adenylyltransferase">
    <location>
        <begin position="1"/>
        <end position="168"/>
    </location>
</feature>
<feature type="binding site" evidence="1">
    <location>
        <begin position="8"/>
        <end position="9"/>
    </location>
    <ligand>
        <name>ATP</name>
        <dbReference type="ChEBI" id="CHEBI:30616"/>
    </ligand>
</feature>
<feature type="binding site" evidence="1">
    <location>
        <position position="8"/>
    </location>
    <ligand>
        <name>substrate</name>
    </ligand>
</feature>
<feature type="binding site" evidence="1">
    <location>
        <position position="16"/>
    </location>
    <ligand>
        <name>ATP</name>
        <dbReference type="ChEBI" id="CHEBI:30616"/>
    </ligand>
</feature>
<feature type="binding site" evidence="1">
    <location>
        <position position="40"/>
    </location>
    <ligand>
        <name>substrate</name>
    </ligand>
</feature>
<feature type="binding site" evidence="1">
    <location>
        <position position="72"/>
    </location>
    <ligand>
        <name>substrate</name>
    </ligand>
</feature>
<feature type="binding site" evidence="1">
    <location>
        <position position="86"/>
    </location>
    <ligand>
        <name>substrate</name>
    </ligand>
</feature>
<feature type="binding site" evidence="1">
    <location>
        <begin position="87"/>
        <end position="89"/>
    </location>
    <ligand>
        <name>ATP</name>
        <dbReference type="ChEBI" id="CHEBI:30616"/>
    </ligand>
</feature>
<feature type="binding site" evidence="1">
    <location>
        <position position="97"/>
    </location>
    <ligand>
        <name>ATP</name>
        <dbReference type="ChEBI" id="CHEBI:30616"/>
    </ligand>
</feature>
<feature type="binding site" evidence="1">
    <location>
        <begin position="122"/>
        <end position="128"/>
    </location>
    <ligand>
        <name>ATP</name>
        <dbReference type="ChEBI" id="CHEBI:30616"/>
    </ligand>
</feature>
<feature type="site" description="Transition state stabilizer" evidence="1">
    <location>
        <position position="16"/>
    </location>
</feature>
<reference key="1">
    <citation type="journal article" date="2015" name="Proc. Natl. Acad. Sci. U.S.A.">
        <title>Trichodesmium genome maintains abundant, widespread noncoding DNA in situ, despite oligotrophic lifestyle.</title>
        <authorList>
            <person name="Walworth N."/>
            <person name="Pfreundt U."/>
            <person name="Nelson W.C."/>
            <person name="Mincer T."/>
            <person name="Heidelberg J.F."/>
            <person name="Fu F."/>
            <person name="Waterbury J.B."/>
            <person name="Glavina del Rio T."/>
            <person name="Goodwin L."/>
            <person name="Kyrpides N.C."/>
            <person name="Land M.L."/>
            <person name="Woyke T."/>
            <person name="Hutchins D.A."/>
            <person name="Hess W.R."/>
            <person name="Webb E.A."/>
        </authorList>
    </citation>
    <scope>NUCLEOTIDE SEQUENCE [LARGE SCALE GENOMIC DNA]</scope>
    <source>
        <strain>IMS101</strain>
    </source>
</reference>
<comment type="function">
    <text evidence="1">Reversibly transfers an adenylyl group from ATP to 4'-phosphopantetheine, yielding dephospho-CoA (dPCoA) and pyrophosphate.</text>
</comment>
<comment type="catalytic activity">
    <reaction evidence="1">
        <text>(R)-4'-phosphopantetheine + ATP + H(+) = 3'-dephospho-CoA + diphosphate</text>
        <dbReference type="Rhea" id="RHEA:19801"/>
        <dbReference type="ChEBI" id="CHEBI:15378"/>
        <dbReference type="ChEBI" id="CHEBI:30616"/>
        <dbReference type="ChEBI" id="CHEBI:33019"/>
        <dbReference type="ChEBI" id="CHEBI:57328"/>
        <dbReference type="ChEBI" id="CHEBI:61723"/>
        <dbReference type="EC" id="2.7.7.3"/>
    </reaction>
</comment>
<comment type="cofactor">
    <cofactor evidence="1">
        <name>Mg(2+)</name>
        <dbReference type="ChEBI" id="CHEBI:18420"/>
    </cofactor>
</comment>
<comment type="pathway">
    <text evidence="1">Cofactor biosynthesis; coenzyme A biosynthesis; CoA from (R)-pantothenate: step 4/5.</text>
</comment>
<comment type="subunit">
    <text evidence="1">Homohexamer.</text>
</comment>
<comment type="subcellular location">
    <subcellularLocation>
        <location evidence="1">Cytoplasm</location>
    </subcellularLocation>
</comment>
<comment type="similarity">
    <text evidence="1">Belongs to the bacterial CoaD family.</text>
</comment>
<dbReference type="EC" id="2.7.7.3" evidence="1"/>
<dbReference type="EMBL" id="CP000393">
    <property type="protein sequence ID" value="ABG50852.1"/>
    <property type="molecule type" value="Genomic_DNA"/>
</dbReference>
<dbReference type="RefSeq" id="WP_011611228.1">
    <property type="nucleotide sequence ID" value="NC_008312.1"/>
</dbReference>
<dbReference type="SMR" id="Q115H2"/>
<dbReference type="STRING" id="203124.Tery_1572"/>
<dbReference type="KEGG" id="ter:Tery_1572"/>
<dbReference type="eggNOG" id="COG0669">
    <property type="taxonomic scope" value="Bacteria"/>
</dbReference>
<dbReference type="HOGENOM" id="CLU_100149_0_1_3"/>
<dbReference type="OrthoDB" id="9806661at2"/>
<dbReference type="UniPathway" id="UPA00241">
    <property type="reaction ID" value="UER00355"/>
</dbReference>
<dbReference type="GO" id="GO:0005737">
    <property type="term" value="C:cytoplasm"/>
    <property type="evidence" value="ECO:0007669"/>
    <property type="project" value="UniProtKB-SubCell"/>
</dbReference>
<dbReference type="GO" id="GO:0005524">
    <property type="term" value="F:ATP binding"/>
    <property type="evidence" value="ECO:0007669"/>
    <property type="project" value="UniProtKB-KW"/>
</dbReference>
<dbReference type="GO" id="GO:0004595">
    <property type="term" value="F:pantetheine-phosphate adenylyltransferase activity"/>
    <property type="evidence" value="ECO:0007669"/>
    <property type="project" value="UniProtKB-UniRule"/>
</dbReference>
<dbReference type="GO" id="GO:0015937">
    <property type="term" value="P:coenzyme A biosynthetic process"/>
    <property type="evidence" value="ECO:0007669"/>
    <property type="project" value="UniProtKB-UniRule"/>
</dbReference>
<dbReference type="CDD" id="cd02163">
    <property type="entry name" value="PPAT"/>
    <property type="match status" value="1"/>
</dbReference>
<dbReference type="Gene3D" id="3.40.50.620">
    <property type="entry name" value="HUPs"/>
    <property type="match status" value="1"/>
</dbReference>
<dbReference type="HAMAP" id="MF_00151">
    <property type="entry name" value="PPAT_bact"/>
    <property type="match status" value="1"/>
</dbReference>
<dbReference type="InterPro" id="IPR004821">
    <property type="entry name" value="Cyt_trans-like"/>
</dbReference>
<dbReference type="InterPro" id="IPR001980">
    <property type="entry name" value="PPAT"/>
</dbReference>
<dbReference type="InterPro" id="IPR014729">
    <property type="entry name" value="Rossmann-like_a/b/a_fold"/>
</dbReference>
<dbReference type="NCBIfam" id="TIGR01510">
    <property type="entry name" value="coaD_prev_kdtB"/>
    <property type="match status" value="1"/>
</dbReference>
<dbReference type="NCBIfam" id="TIGR00125">
    <property type="entry name" value="cyt_tran_rel"/>
    <property type="match status" value="1"/>
</dbReference>
<dbReference type="PANTHER" id="PTHR21342">
    <property type="entry name" value="PHOSPHOPANTETHEINE ADENYLYLTRANSFERASE"/>
    <property type="match status" value="1"/>
</dbReference>
<dbReference type="PANTHER" id="PTHR21342:SF1">
    <property type="entry name" value="PHOSPHOPANTETHEINE ADENYLYLTRANSFERASE"/>
    <property type="match status" value="1"/>
</dbReference>
<dbReference type="Pfam" id="PF01467">
    <property type="entry name" value="CTP_transf_like"/>
    <property type="match status" value="1"/>
</dbReference>
<dbReference type="PRINTS" id="PR01020">
    <property type="entry name" value="LPSBIOSNTHSS"/>
</dbReference>
<dbReference type="SUPFAM" id="SSF52374">
    <property type="entry name" value="Nucleotidylyl transferase"/>
    <property type="match status" value="1"/>
</dbReference>
<sequence>MIAIYPGSFDPITLGHIDIIERGCNLFEKVIVAVLRNQSKTSLFTIEQRLNQICHSTKHLLNVEVASFDGLAVNYAKMQQAKVLIRGLRVLSDFEKELQMAHTNKTLSPEIETVFLATSNEYSFLSSSVVKEIAVFGGSVDHLVPQHIAIDIYKCYDKTQPKPILNQR</sequence>
<evidence type="ECO:0000255" key="1">
    <source>
        <dbReference type="HAMAP-Rule" id="MF_00151"/>
    </source>
</evidence>
<protein>
    <recommendedName>
        <fullName evidence="1">Phosphopantetheine adenylyltransferase</fullName>
        <ecNumber evidence="1">2.7.7.3</ecNumber>
    </recommendedName>
    <alternativeName>
        <fullName evidence="1">Dephospho-CoA pyrophosphorylase</fullName>
    </alternativeName>
    <alternativeName>
        <fullName evidence="1">Pantetheine-phosphate adenylyltransferase</fullName>
        <shortName evidence="1">PPAT</shortName>
    </alternativeName>
</protein>
<accession>Q115H2</accession>
<name>COAD_TRIEI</name>
<keyword id="KW-0067">ATP-binding</keyword>
<keyword id="KW-0173">Coenzyme A biosynthesis</keyword>
<keyword id="KW-0963">Cytoplasm</keyword>
<keyword id="KW-0460">Magnesium</keyword>
<keyword id="KW-0547">Nucleotide-binding</keyword>
<keyword id="KW-0548">Nucleotidyltransferase</keyword>
<keyword id="KW-0808">Transferase</keyword>
<gene>
    <name evidence="1" type="primary">coaD</name>
    <name type="ordered locus">Tery_1572</name>
</gene>
<proteinExistence type="inferred from homology"/>